<keyword id="KW-0963">Cytoplasm</keyword>
<keyword id="KW-0378">Hydrolase</keyword>
<sequence length="105" mass="11573">MIPGEYQLKDGDIELCAGRERIQLDVGNTGDRPVQIGSHYHFAEANPALDFDRVKVRGYRLDVAAGTAIRFEPGQTRSVTLIPFAGTREIYGFRGEVMGSLDSTN</sequence>
<dbReference type="EC" id="3.5.1.5" evidence="1"/>
<dbReference type="EMBL" id="CP000514">
    <property type="protein sequence ID" value="ABM20068.1"/>
    <property type="molecule type" value="Genomic_DNA"/>
</dbReference>
<dbReference type="RefSeq" id="WP_011786436.1">
    <property type="nucleotide sequence ID" value="NC_008740.1"/>
</dbReference>
<dbReference type="SMR" id="A1U4Z9"/>
<dbReference type="STRING" id="351348.Maqu_2994"/>
<dbReference type="KEGG" id="maq:Maqu_2994"/>
<dbReference type="eggNOG" id="COG0832">
    <property type="taxonomic scope" value="Bacteria"/>
</dbReference>
<dbReference type="HOGENOM" id="CLU_129707_1_1_6"/>
<dbReference type="OrthoDB" id="9797217at2"/>
<dbReference type="UniPathway" id="UPA00258">
    <property type="reaction ID" value="UER00370"/>
</dbReference>
<dbReference type="Proteomes" id="UP000000998">
    <property type="component" value="Chromosome"/>
</dbReference>
<dbReference type="GO" id="GO:0035550">
    <property type="term" value="C:urease complex"/>
    <property type="evidence" value="ECO:0007669"/>
    <property type="project" value="InterPro"/>
</dbReference>
<dbReference type="GO" id="GO:0009039">
    <property type="term" value="F:urease activity"/>
    <property type="evidence" value="ECO:0007669"/>
    <property type="project" value="UniProtKB-UniRule"/>
</dbReference>
<dbReference type="GO" id="GO:0043419">
    <property type="term" value="P:urea catabolic process"/>
    <property type="evidence" value="ECO:0007669"/>
    <property type="project" value="UniProtKB-UniRule"/>
</dbReference>
<dbReference type="CDD" id="cd00407">
    <property type="entry name" value="Urease_beta"/>
    <property type="match status" value="1"/>
</dbReference>
<dbReference type="FunFam" id="2.10.150.10:FF:000001">
    <property type="entry name" value="Urease subunit beta"/>
    <property type="match status" value="1"/>
</dbReference>
<dbReference type="Gene3D" id="2.10.150.10">
    <property type="entry name" value="Urease, beta subunit"/>
    <property type="match status" value="1"/>
</dbReference>
<dbReference type="HAMAP" id="MF_01954">
    <property type="entry name" value="Urease_beta"/>
    <property type="match status" value="1"/>
</dbReference>
<dbReference type="InterPro" id="IPR002019">
    <property type="entry name" value="Urease_beta-like"/>
</dbReference>
<dbReference type="InterPro" id="IPR036461">
    <property type="entry name" value="Urease_betasu_sf"/>
</dbReference>
<dbReference type="InterPro" id="IPR050069">
    <property type="entry name" value="Urease_subunit"/>
</dbReference>
<dbReference type="NCBIfam" id="NF009682">
    <property type="entry name" value="PRK13203.1"/>
    <property type="match status" value="1"/>
</dbReference>
<dbReference type="NCBIfam" id="TIGR00192">
    <property type="entry name" value="urease_beta"/>
    <property type="match status" value="1"/>
</dbReference>
<dbReference type="PANTHER" id="PTHR33569">
    <property type="entry name" value="UREASE"/>
    <property type="match status" value="1"/>
</dbReference>
<dbReference type="PANTHER" id="PTHR33569:SF1">
    <property type="entry name" value="UREASE"/>
    <property type="match status" value="1"/>
</dbReference>
<dbReference type="Pfam" id="PF00699">
    <property type="entry name" value="Urease_beta"/>
    <property type="match status" value="1"/>
</dbReference>
<dbReference type="SUPFAM" id="SSF51278">
    <property type="entry name" value="Urease, beta-subunit"/>
    <property type="match status" value="1"/>
</dbReference>
<proteinExistence type="inferred from homology"/>
<reference key="1">
    <citation type="journal article" date="2011" name="Appl. Environ. Microbiol.">
        <title>Genomic potential of Marinobacter aquaeolei, a biogeochemical 'opportunitroph'.</title>
        <authorList>
            <person name="Singer E."/>
            <person name="Webb E.A."/>
            <person name="Nelson W.C."/>
            <person name="Heidelberg J.F."/>
            <person name="Ivanova N."/>
            <person name="Pati A."/>
            <person name="Edwards K.J."/>
        </authorList>
    </citation>
    <scope>NUCLEOTIDE SEQUENCE [LARGE SCALE GENOMIC DNA]</scope>
    <source>
        <strain>ATCC 700491 / DSM 11845 / VT8</strain>
    </source>
</reference>
<gene>
    <name evidence="1" type="primary">ureB</name>
    <name type="ordered locus">Maqu_2994</name>
</gene>
<evidence type="ECO:0000255" key="1">
    <source>
        <dbReference type="HAMAP-Rule" id="MF_01954"/>
    </source>
</evidence>
<feature type="chain" id="PRO_1000070740" description="Urease subunit beta">
    <location>
        <begin position="1"/>
        <end position="105"/>
    </location>
</feature>
<accession>A1U4Z9</accession>
<name>URE2_MARN8</name>
<protein>
    <recommendedName>
        <fullName evidence="1">Urease subunit beta</fullName>
        <ecNumber evidence="1">3.5.1.5</ecNumber>
    </recommendedName>
    <alternativeName>
        <fullName evidence="1">Urea amidohydrolase subunit beta</fullName>
    </alternativeName>
</protein>
<comment type="catalytic activity">
    <reaction evidence="1">
        <text>urea + 2 H2O + H(+) = hydrogencarbonate + 2 NH4(+)</text>
        <dbReference type="Rhea" id="RHEA:20557"/>
        <dbReference type="ChEBI" id="CHEBI:15377"/>
        <dbReference type="ChEBI" id="CHEBI:15378"/>
        <dbReference type="ChEBI" id="CHEBI:16199"/>
        <dbReference type="ChEBI" id="CHEBI:17544"/>
        <dbReference type="ChEBI" id="CHEBI:28938"/>
        <dbReference type="EC" id="3.5.1.5"/>
    </reaction>
</comment>
<comment type="pathway">
    <text evidence="1">Nitrogen metabolism; urea degradation; CO(2) and NH(3) from urea (urease route): step 1/1.</text>
</comment>
<comment type="subunit">
    <text evidence="1">Heterotrimer of UreA (gamma), UreB (beta) and UreC (alpha) subunits. Three heterotrimers associate to form the active enzyme.</text>
</comment>
<comment type="subcellular location">
    <subcellularLocation>
        <location evidence="1">Cytoplasm</location>
    </subcellularLocation>
</comment>
<comment type="similarity">
    <text evidence="1">Belongs to the urease beta subunit family.</text>
</comment>
<organism>
    <name type="scientific">Marinobacter nauticus (strain ATCC 700491 / DSM 11845 / VT8)</name>
    <name type="common">Marinobacter aquaeolei</name>
    <dbReference type="NCBI Taxonomy" id="351348"/>
    <lineage>
        <taxon>Bacteria</taxon>
        <taxon>Pseudomonadati</taxon>
        <taxon>Pseudomonadota</taxon>
        <taxon>Gammaproteobacteria</taxon>
        <taxon>Pseudomonadales</taxon>
        <taxon>Marinobacteraceae</taxon>
        <taxon>Marinobacter</taxon>
    </lineage>
</organism>